<organism>
    <name type="scientific">Xenopus laevis</name>
    <name type="common">African clawed frog</name>
    <dbReference type="NCBI Taxonomy" id="8355"/>
    <lineage>
        <taxon>Eukaryota</taxon>
        <taxon>Metazoa</taxon>
        <taxon>Chordata</taxon>
        <taxon>Craniata</taxon>
        <taxon>Vertebrata</taxon>
        <taxon>Euteleostomi</taxon>
        <taxon>Amphibia</taxon>
        <taxon>Batrachia</taxon>
        <taxon>Anura</taxon>
        <taxon>Pipoidea</taxon>
        <taxon>Pipidae</taxon>
        <taxon>Xenopodinae</taxon>
        <taxon>Xenopus</taxon>
        <taxon>Xenopus</taxon>
    </lineage>
</organism>
<reference key="1">
    <citation type="submission" date="2004-10" db="EMBL/GenBank/DDBJ databases">
        <authorList>
            <consortium name="NIH - Xenopus Gene Collection (XGC) project"/>
        </authorList>
    </citation>
    <scope>NUCLEOTIDE SEQUENCE [LARGE SCALE MRNA]</scope>
    <source>
        <tissue>Eye</tissue>
    </source>
</reference>
<feature type="chain" id="PRO_0000361556" description="Ubiquitin thioesterase zranb1-A">
    <location>
        <begin position="1"/>
        <end position="701"/>
    </location>
</feature>
<feature type="repeat" description="ANK 1">
    <location>
        <begin position="253"/>
        <end position="283"/>
    </location>
</feature>
<feature type="repeat" description="ANK 2">
    <location>
        <begin position="306"/>
        <end position="333"/>
    </location>
</feature>
<feature type="domain" description="OTU" evidence="3">
    <location>
        <begin position="425"/>
        <end position="585"/>
    </location>
</feature>
<feature type="zinc finger region" description="RanBP2-type 1" evidence="4">
    <location>
        <begin position="3"/>
        <end position="33"/>
    </location>
</feature>
<feature type="zinc finger region" description="RanBP2-type 2" evidence="4">
    <location>
        <begin position="79"/>
        <end position="108"/>
    </location>
</feature>
<feature type="zinc finger region" description="RanBP2-type 3" evidence="4">
    <location>
        <begin position="143"/>
        <end position="173"/>
    </location>
</feature>
<feature type="region of interest" description="Disordered" evidence="5">
    <location>
        <begin position="108"/>
        <end position="129"/>
    </location>
</feature>
<feature type="region of interest" description="Disordered" evidence="5">
    <location>
        <begin position="198"/>
        <end position="219"/>
    </location>
</feature>
<feature type="compositionally biased region" description="Polar residues" evidence="5">
    <location>
        <begin position="108"/>
        <end position="121"/>
    </location>
</feature>
<feature type="compositionally biased region" description="Polar residues" evidence="5">
    <location>
        <begin position="202"/>
        <end position="214"/>
    </location>
</feature>
<feature type="active site" description="Nucleophile" evidence="2">
    <location>
        <position position="436"/>
    </location>
</feature>
<feature type="active site" description="Proton acceptor" evidence="1">
    <location>
        <position position="578"/>
    </location>
</feature>
<feature type="binding site" evidence="4">
    <location>
        <position position="10"/>
    </location>
    <ligand>
        <name>Zn(2+)</name>
        <dbReference type="ChEBI" id="CHEBI:29105"/>
        <label>1</label>
    </ligand>
</feature>
<feature type="binding site" evidence="4">
    <location>
        <position position="13"/>
    </location>
    <ligand>
        <name>Zn(2+)</name>
        <dbReference type="ChEBI" id="CHEBI:29105"/>
        <label>1</label>
    </ligand>
</feature>
<feature type="binding site" evidence="4">
    <location>
        <position position="24"/>
    </location>
    <ligand>
        <name>Zn(2+)</name>
        <dbReference type="ChEBI" id="CHEBI:29105"/>
        <label>1</label>
    </ligand>
</feature>
<feature type="binding site" evidence="4">
    <location>
        <position position="27"/>
    </location>
    <ligand>
        <name>Zn(2+)</name>
        <dbReference type="ChEBI" id="CHEBI:29105"/>
        <label>1</label>
    </ligand>
</feature>
<feature type="binding site" evidence="4">
    <location>
        <position position="85"/>
    </location>
    <ligand>
        <name>Zn(2+)</name>
        <dbReference type="ChEBI" id="CHEBI:29105"/>
        <label>2</label>
    </ligand>
</feature>
<feature type="binding site" evidence="4">
    <location>
        <position position="88"/>
    </location>
    <ligand>
        <name>Zn(2+)</name>
        <dbReference type="ChEBI" id="CHEBI:29105"/>
        <label>2</label>
    </ligand>
</feature>
<feature type="binding site" evidence="4">
    <location>
        <position position="99"/>
    </location>
    <ligand>
        <name>Zn(2+)</name>
        <dbReference type="ChEBI" id="CHEBI:29105"/>
        <label>2</label>
    </ligand>
</feature>
<feature type="binding site" evidence="4">
    <location>
        <position position="102"/>
    </location>
    <ligand>
        <name>Zn(2+)</name>
        <dbReference type="ChEBI" id="CHEBI:29105"/>
        <label>2</label>
    </ligand>
</feature>
<feature type="binding site" evidence="4">
    <location>
        <position position="150"/>
    </location>
    <ligand>
        <name>Zn(2+)</name>
        <dbReference type="ChEBI" id="CHEBI:29105"/>
        <label>3</label>
    </ligand>
</feature>
<feature type="binding site" evidence="4">
    <location>
        <position position="153"/>
    </location>
    <ligand>
        <name>Zn(2+)</name>
        <dbReference type="ChEBI" id="CHEBI:29105"/>
        <label>3</label>
    </ligand>
</feature>
<feature type="binding site" evidence="4">
    <location>
        <position position="164"/>
    </location>
    <ligand>
        <name>Zn(2+)</name>
        <dbReference type="ChEBI" id="CHEBI:29105"/>
        <label>3</label>
    </ligand>
</feature>
<feature type="binding site" evidence="4">
    <location>
        <position position="167"/>
    </location>
    <ligand>
        <name>Zn(2+)</name>
        <dbReference type="ChEBI" id="CHEBI:29105"/>
        <label>3</label>
    </ligand>
</feature>
<accession>Q5U595</accession>
<comment type="function">
    <text evidence="2">Ubiquitin thioesterase, which specifically hydrolyzes 'Lys-29'-linked and 'Lys-33'-linked diubiquitin (By similarity). Also cleaves 'Lys-63'-linked chains, but with 40-fold less efficiency compared to 'Lys-29'-linked ones (By similarity). Positive regulator of the Wnt signaling pathway that deubiquitinates apc protein, a negative regulator of Wnt-mediated transcription (By similarity). Acts as a regulator of autophagy by mediating deubiquitination of pik3c3/vps34, thereby promoting autophagosome maturation (By similarity). Plays a role in the regulation of cell morphology and cytoskeletal organization (By similarity). Required in the stress fiber dynamics and cell migration (By similarity).</text>
</comment>
<comment type="catalytic activity">
    <reaction evidence="2">
        <text>Thiol-dependent hydrolysis of ester, thioester, amide, peptide and isopeptide bonds formed by the C-terminal Gly of ubiquitin (a 76-residue protein attached to proteins as an intracellular targeting signal).</text>
        <dbReference type="EC" id="3.4.19.12"/>
    </reaction>
</comment>
<comment type="subcellular location">
    <subcellularLocation>
        <location evidence="2">Cytoplasm</location>
    </subcellularLocation>
    <subcellularLocation>
        <location evidence="2">Nucleus</location>
    </subcellularLocation>
    <text evidence="2">Enriched in punctate localization in the cytoplasm.</text>
</comment>
<comment type="domain">
    <text evidence="2">The RanBP2-type zinc fingers, also called NZFs, mediate the interaction with ubiquitin and determine linkage specificity. RanBP2-type zinc fingers 1 and 2 (also named NZF1 and NZF2) specifically recognize and bind 'Lys-29'- and 'Lys-33'-linked ubiquitin. RanBP2-type zinc finger 3 (also named NZF3) binds 'Lys-33'-linked ubiquitin and shows weak binding to 'Lys-6'-, 'Lys-48'- and 'Lys-63'-linked ubiquitin chains but it does not interact with 'Lys-29'-linked chains.</text>
</comment>
<comment type="domain">
    <text evidence="2">The OTU domain mediates the deubiquitinating activity.</text>
</comment>
<comment type="domain">
    <text evidence="2">The second ankyrin repeat ANK 2 is termed AnkUBD, it interacts with ubiquitin hydrophobic patch and contributes to linkage specificity.</text>
</comment>
<comment type="similarity">
    <text evidence="6">Belongs to the peptidase C64 family.</text>
</comment>
<protein>
    <recommendedName>
        <fullName evidence="6">Ubiquitin thioesterase zranb1-A</fullName>
        <ecNumber evidence="2">3.4.19.12</ecNumber>
    </recommendedName>
    <alternativeName>
        <fullName>Zinc finger Ran-binding domain-containing protein 1A</fullName>
    </alternativeName>
</protein>
<dbReference type="EC" id="3.4.19.12" evidence="2"/>
<dbReference type="EMBL" id="BC084789">
    <property type="protein sequence ID" value="AAH84789.1"/>
    <property type="molecule type" value="mRNA"/>
</dbReference>
<dbReference type="RefSeq" id="NP_001088463.1">
    <property type="nucleotide sequence ID" value="NM_001094994.1"/>
</dbReference>
<dbReference type="SMR" id="Q5U595"/>
<dbReference type="MEROPS" id="C64.004"/>
<dbReference type="DNASU" id="495328"/>
<dbReference type="GeneID" id="495328"/>
<dbReference type="KEGG" id="xla:495328"/>
<dbReference type="AGR" id="Xenbase:XB-GENE-876406"/>
<dbReference type="CTD" id="495328"/>
<dbReference type="Xenbase" id="XB-GENE-876406">
    <property type="gene designation" value="zranb1.L"/>
</dbReference>
<dbReference type="OMA" id="MCDTKDD"/>
<dbReference type="OrthoDB" id="6275030at2759"/>
<dbReference type="Proteomes" id="UP000186698">
    <property type="component" value="Chromosome 7L"/>
</dbReference>
<dbReference type="Bgee" id="495328">
    <property type="expression patterns" value="Expressed in muscle tissue and 19 other cell types or tissues"/>
</dbReference>
<dbReference type="GO" id="GO:0005737">
    <property type="term" value="C:cytoplasm"/>
    <property type="evidence" value="ECO:0000250"/>
    <property type="project" value="UniProtKB"/>
</dbReference>
<dbReference type="GO" id="GO:0005634">
    <property type="term" value="C:nucleus"/>
    <property type="evidence" value="ECO:0000250"/>
    <property type="project" value="UniProtKB"/>
</dbReference>
<dbReference type="GO" id="GO:0004843">
    <property type="term" value="F:cysteine-type deubiquitinase activity"/>
    <property type="evidence" value="ECO:0000250"/>
    <property type="project" value="UniProtKB"/>
</dbReference>
<dbReference type="GO" id="GO:0070530">
    <property type="term" value="F:K63-linked polyubiquitin modification-dependent protein binding"/>
    <property type="evidence" value="ECO:0000318"/>
    <property type="project" value="GO_Central"/>
</dbReference>
<dbReference type="GO" id="GO:0008270">
    <property type="term" value="F:zinc ion binding"/>
    <property type="evidence" value="ECO:0007669"/>
    <property type="project" value="UniProtKB-KW"/>
</dbReference>
<dbReference type="GO" id="GO:0016477">
    <property type="term" value="P:cell migration"/>
    <property type="evidence" value="ECO:0000250"/>
    <property type="project" value="UniProtKB"/>
</dbReference>
<dbReference type="GO" id="GO:0007010">
    <property type="term" value="P:cytoskeleton organization"/>
    <property type="evidence" value="ECO:0000250"/>
    <property type="project" value="UniProtKB"/>
</dbReference>
<dbReference type="GO" id="GO:0030177">
    <property type="term" value="P:positive regulation of Wnt signaling pathway"/>
    <property type="evidence" value="ECO:0000250"/>
    <property type="project" value="UniProtKB"/>
</dbReference>
<dbReference type="GO" id="GO:0071947">
    <property type="term" value="P:protein deubiquitination involved in ubiquitin-dependent protein catabolic process"/>
    <property type="evidence" value="ECO:0000318"/>
    <property type="project" value="GO_Central"/>
</dbReference>
<dbReference type="GO" id="GO:0035523">
    <property type="term" value="P:protein K29-linked deubiquitination"/>
    <property type="evidence" value="ECO:0000250"/>
    <property type="project" value="UniProtKB"/>
</dbReference>
<dbReference type="GO" id="GO:1990168">
    <property type="term" value="P:protein K33-linked deubiquitination"/>
    <property type="evidence" value="ECO:0000250"/>
    <property type="project" value="UniProtKB"/>
</dbReference>
<dbReference type="GO" id="GO:0070536">
    <property type="term" value="P:protein K63-linked deubiquitination"/>
    <property type="evidence" value="ECO:0000250"/>
    <property type="project" value="UniProtKB"/>
</dbReference>
<dbReference type="GO" id="GO:0022604">
    <property type="term" value="P:regulation of cell morphogenesis"/>
    <property type="evidence" value="ECO:0000250"/>
    <property type="project" value="UniProtKB"/>
</dbReference>
<dbReference type="GO" id="GO:0016055">
    <property type="term" value="P:Wnt signaling pathway"/>
    <property type="evidence" value="ECO:0007669"/>
    <property type="project" value="UniProtKB-KW"/>
</dbReference>
<dbReference type="CDD" id="cd22767">
    <property type="entry name" value="OTU_ZRANB1"/>
    <property type="match status" value="1"/>
</dbReference>
<dbReference type="FunFam" id="1.25.40.560:FF:000001">
    <property type="entry name" value="ubiquitin thioesterase ZRANB1 isoform X1"/>
    <property type="match status" value="1"/>
</dbReference>
<dbReference type="FunFam" id="4.10.1060.10:FF:000006">
    <property type="entry name" value="ubiquitin thioesterase ZRANB1 isoform X1"/>
    <property type="match status" value="1"/>
</dbReference>
<dbReference type="FunFam" id="4.10.1060.10:FF:000011">
    <property type="entry name" value="ubiquitin thioesterase ZRANB1 isoform X1"/>
    <property type="match status" value="1"/>
</dbReference>
<dbReference type="FunFam" id="4.10.1060.10:FF:000012">
    <property type="entry name" value="ubiquitin thioesterase ZRANB1 isoform X1"/>
    <property type="match status" value="1"/>
</dbReference>
<dbReference type="Gene3D" id="1.25.40.560">
    <property type="match status" value="1"/>
</dbReference>
<dbReference type="Gene3D" id="4.10.1060.10">
    <property type="entry name" value="Zinc finger, RanBP2-type"/>
    <property type="match status" value="3"/>
</dbReference>
<dbReference type="InterPro" id="IPR041294">
    <property type="entry name" value="AnkUBD"/>
</dbReference>
<dbReference type="InterPro" id="IPR051346">
    <property type="entry name" value="OTU_Deubiquitinase"/>
</dbReference>
<dbReference type="InterPro" id="IPR003323">
    <property type="entry name" value="OTU_dom"/>
</dbReference>
<dbReference type="InterPro" id="IPR001876">
    <property type="entry name" value="Znf_RanBP2"/>
</dbReference>
<dbReference type="InterPro" id="IPR036443">
    <property type="entry name" value="Znf_RanBP2_sf"/>
</dbReference>
<dbReference type="InterPro" id="IPR049768">
    <property type="entry name" value="ZRANB1_OTU"/>
</dbReference>
<dbReference type="PANTHER" id="PTHR13367">
    <property type="entry name" value="UBIQUITIN THIOESTERASE"/>
    <property type="match status" value="1"/>
</dbReference>
<dbReference type="PANTHER" id="PTHR13367:SF28">
    <property type="entry name" value="UBIQUITIN THIOESTERASE ZRANB1"/>
    <property type="match status" value="1"/>
</dbReference>
<dbReference type="Pfam" id="PF18418">
    <property type="entry name" value="AnkUBD"/>
    <property type="match status" value="1"/>
</dbReference>
<dbReference type="Pfam" id="PF02338">
    <property type="entry name" value="OTU"/>
    <property type="match status" value="1"/>
</dbReference>
<dbReference type="Pfam" id="PF00641">
    <property type="entry name" value="Zn_ribbon_RanBP"/>
    <property type="match status" value="2"/>
</dbReference>
<dbReference type="SMART" id="SM00547">
    <property type="entry name" value="ZnF_RBZ"/>
    <property type="match status" value="3"/>
</dbReference>
<dbReference type="SUPFAM" id="SSF90209">
    <property type="entry name" value="Ran binding protein zinc finger-like"/>
    <property type="match status" value="2"/>
</dbReference>
<dbReference type="PROSITE" id="PS50802">
    <property type="entry name" value="OTU"/>
    <property type="match status" value="1"/>
</dbReference>
<dbReference type="PROSITE" id="PS01358">
    <property type="entry name" value="ZF_RANBP2_1"/>
    <property type="match status" value="3"/>
</dbReference>
<dbReference type="PROSITE" id="PS50199">
    <property type="entry name" value="ZF_RANBP2_2"/>
    <property type="match status" value="3"/>
</dbReference>
<gene>
    <name type="primary">zranb1-a</name>
</gene>
<name>ZRN1A_XENLA</name>
<proteinExistence type="evidence at transcript level"/>
<evidence type="ECO:0000250" key="1">
    <source>
        <dbReference type="UniProtKB" id="Q6GQQ9"/>
    </source>
</evidence>
<evidence type="ECO:0000250" key="2">
    <source>
        <dbReference type="UniProtKB" id="Q9UGI0"/>
    </source>
</evidence>
<evidence type="ECO:0000255" key="3">
    <source>
        <dbReference type="PROSITE-ProRule" id="PRU00139"/>
    </source>
</evidence>
<evidence type="ECO:0000255" key="4">
    <source>
        <dbReference type="PROSITE-ProRule" id="PRU00322"/>
    </source>
</evidence>
<evidence type="ECO:0000256" key="5">
    <source>
        <dbReference type="SAM" id="MobiDB-lite"/>
    </source>
</evidence>
<evidence type="ECO:0000305" key="6"/>
<keyword id="KW-0040">ANK repeat</keyword>
<keyword id="KW-0963">Cytoplasm</keyword>
<keyword id="KW-0378">Hydrolase</keyword>
<keyword id="KW-0479">Metal-binding</keyword>
<keyword id="KW-0539">Nucleus</keyword>
<keyword id="KW-0645">Protease</keyword>
<keyword id="KW-1185">Reference proteome</keyword>
<keyword id="KW-0677">Repeat</keyword>
<keyword id="KW-0788">Thiol protease</keyword>
<keyword id="KW-0833">Ubl conjugation pathway</keyword>
<keyword id="KW-0879">Wnt signaling pathway</keyword>
<keyword id="KW-0862">Zinc</keyword>
<keyword id="KW-0863">Zinc-finger</keyword>
<sequence>MTEHGIKWGCEYCTYENWPSAIKCTMCRAPRPSGAIITEEPFKNSTPDVGSMERDIGSPLICPDSSARPRVKSSYSMEPSSKWSCQICTYLNWPRAIRCTQCLSQRRTRSPTESPQSSGSGLRSIPSPIDPCEEYNDRNKLNIKGQHWTCSACTYENCAKAKKCVVCDHPTPNNMDAIELANTDEASSIINEQDRARWRGGCSSSNSQRRSPPTSKRDSDMDFQRIELAGAVGSKEEFELDLKKLKQIKNRMRKTDWLFLNACVGIVEGDLSAVESYKTSGGDIARQLSADEVRLLNRPSAFDVGYTLVHLSIRFQRQDMLAILLTEVSQHAAKCIPAMVCPELTEQIRREIAASVHQRKGDFACYFLTDLVTFTLPADIEDLPPTVQEKLFDEVLDRDVQKELEEESPIINWSLELGTRLDSRLYALWNRTAGDCLLDSVLQATWGIYDKDSVLRKALHDSLHDCSHWFYSRWKEWESWYSQSFGLHFSLREEQWQEDWAFILSLASQPGASLEQTHIFVLAHILRRPIIVYGVKYYKSFRGETLGYTRFQGVYLPLLWEQSFCWKSPIALGYTRGHFSALVAMENDGFDNRGAGANLNTDDDITVTFLPLVDSERKLLHIHFLSAQELGNEDQQEKLLREWMDCCVTEGGVLVAMQKSSRRRNHPLVTQMVEKWLDGYRQIRPCTALSDGEEDEDDEDE</sequence>